<organismHost>
    <name type="scientific">Hordeum vulgare</name>
    <name type="common">Barley</name>
    <dbReference type="NCBI Taxonomy" id="4513"/>
</organismHost>
<organismHost>
    <name type="scientific">Triticum aestivum</name>
    <name type="common">Wheat</name>
    <dbReference type="NCBI Taxonomy" id="4565"/>
</organismHost>
<organismHost>
    <name type="scientific">Zea mays</name>
    <name type="common">Maize</name>
    <dbReference type="NCBI Taxonomy" id="4577"/>
</organismHost>
<organism evidence="2">
    <name type="scientific">High plains virus (isolate Texas 96)</name>
    <dbReference type="NCBI Taxonomy" id="247484"/>
    <lineage>
        <taxon>Viruses</taxon>
        <taxon>Riboviria</taxon>
        <taxon>dsRNA viruses</taxon>
        <taxon>High Plains virus</taxon>
    </lineage>
</organism>
<feature type="initiator methionine" description="Removed" evidence="1">
    <location>
        <position position="1"/>
    </location>
</feature>
<feature type="chain" id="PRO_0000222950" description="Capsid protein">
    <location>
        <begin position="2"/>
        <end position="289"/>
    </location>
</feature>
<feature type="modified residue" description="N-acetylalanine; by host" evidence="1">
    <location>
        <position position="2"/>
    </location>
</feature>
<feature type="sequence variant" evidence="1">
    <original>E</original>
    <variation>D</variation>
    <location>
        <position position="205"/>
    </location>
</feature>
<feature type="sequence variant" evidence="1">
    <original>E</original>
    <variation>N</variation>
    <location>
        <position position="205"/>
    </location>
</feature>
<dbReference type="SMR" id="P83666"/>
<dbReference type="GO" id="GO:0019028">
    <property type="term" value="C:viral capsid"/>
    <property type="evidence" value="ECO:0007669"/>
    <property type="project" value="UniProtKB-KW"/>
</dbReference>
<name>CAPSD_HPVTX</name>
<proteinExistence type="evidence at protein level"/>
<comment type="subcellular location">
    <subcellularLocation>
        <location evidence="2">Virion</location>
    </subcellularLocation>
</comment>
<comment type="similarity">
    <text evidence="2">Belongs to the high plain virus capsid family.</text>
</comment>
<evidence type="ECO:0000269" key="1">
    <source ref="1"/>
</evidence>
<evidence type="ECO:0000305" key="2"/>
<protein>
    <recommendedName>
        <fullName>Capsid protein</fullName>
    </recommendedName>
    <alternativeName>
        <fullName>Coat protein</fullName>
    </alternativeName>
</protein>
<accession>P83666</accession>
<keyword id="KW-0007">Acetylation</keyword>
<keyword id="KW-0167">Capsid protein</keyword>
<keyword id="KW-0903">Direct protein sequencing</keyword>
<keyword id="KW-0946">Virion</keyword>
<reference evidence="2" key="1">
    <citation type="journal article" date="2004" name="Plant Dis.">
        <title>Biological and molecular variability among high plains virus isolates.</title>
        <authorList>
            <person name="Seifers D.L."/>
            <person name="She Y.-M."/>
            <person name="Harvey T.L."/>
            <person name="Martin T.J."/>
            <person name="Haber S."/>
            <person name="Ens W."/>
            <person name="Standing K.G."/>
            <person name="Louie R."/>
            <person name="Gordon D.T."/>
        </authorList>
        <dbReference type="AGRICOLA" id="IND43708726"/>
    </citation>
    <scope>PROTEIN SEQUENCE OF 2-289</scope>
    <scope>ACETYLATION AT ALA-2</scope>
    <scope>VARIANTS ASN-205 AND ASP-205</scope>
</reference>
<sequence length="289" mass="33395">MALSFKNSSGVLKAKTLKDGFVTSSDIETTVHDFSYEKPDLSSVDGFSLKSLLSSDGWHIVVAYQSVTNSERLNNNKKNNKTQRFKLFTFDIIVIPGLKPNKSKNVVSYNRFMALCIGMICYHKKWKVFNWSNKRYEDNKNTINFNEDDDFMNKLAMSAGFSKEHKYHWFYSTGFEYTFDIFPAEVIAMSLFRWSHRVELKIKYEHESDLVAPMVRQVTKRGNISDVMDIVGKDIIAKKYEEIVKDRSSIGIGTKYNDILDEFKDIFNKIDSSSLDSTIKNCFNKIDGE</sequence>